<accession>B1IIL7</accession>
<feature type="chain" id="PRO_0000350123" description="Probable dual-specificity RNA methyltransferase RlmN">
    <location>
        <begin position="1"/>
        <end position="342"/>
    </location>
</feature>
<feature type="domain" description="Radical SAM core" evidence="2">
    <location>
        <begin position="97"/>
        <end position="327"/>
    </location>
</feature>
<feature type="active site" description="Proton acceptor" evidence="1">
    <location>
        <position position="91"/>
    </location>
</feature>
<feature type="active site" description="S-methylcysteine intermediate" evidence="1">
    <location>
        <position position="332"/>
    </location>
</feature>
<feature type="binding site" evidence="1">
    <location>
        <position position="111"/>
    </location>
    <ligand>
        <name>[4Fe-4S] cluster</name>
        <dbReference type="ChEBI" id="CHEBI:49883"/>
        <note>4Fe-4S-S-AdoMet</note>
    </ligand>
</feature>
<feature type="binding site" evidence="1">
    <location>
        <position position="115"/>
    </location>
    <ligand>
        <name>[4Fe-4S] cluster</name>
        <dbReference type="ChEBI" id="CHEBI:49883"/>
        <note>4Fe-4S-S-AdoMet</note>
    </ligand>
</feature>
<feature type="binding site" evidence="1">
    <location>
        <position position="118"/>
    </location>
    <ligand>
        <name>[4Fe-4S] cluster</name>
        <dbReference type="ChEBI" id="CHEBI:49883"/>
        <note>4Fe-4S-S-AdoMet</note>
    </ligand>
</feature>
<feature type="binding site" evidence="1">
    <location>
        <begin position="158"/>
        <end position="159"/>
    </location>
    <ligand>
        <name>S-adenosyl-L-methionine</name>
        <dbReference type="ChEBI" id="CHEBI:59789"/>
    </ligand>
</feature>
<feature type="binding site" evidence="1">
    <location>
        <position position="190"/>
    </location>
    <ligand>
        <name>S-adenosyl-L-methionine</name>
        <dbReference type="ChEBI" id="CHEBI:59789"/>
    </ligand>
</feature>
<feature type="binding site" evidence="1">
    <location>
        <begin position="213"/>
        <end position="215"/>
    </location>
    <ligand>
        <name>S-adenosyl-L-methionine</name>
        <dbReference type="ChEBI" id="CHEBI:59789"/>
    </ligand>
</feature>
<feature type="binding site" evidence="1">
    <location>
        <position position="289"/>
    </location>
    <ligand>
        <name>S-adenosyl-L-methionine</name>
        <dbReference type="ChEBI" id="CHEBI:59789"/>
    </ligand>
</feature>
<feature type="disulfide bond" description="(transient)" evidence="1">
    <location>
        <begin position="104"/>
        <end position="332"/>
    </location>
</feature>
<name>RLMN_CLOBK</name>
<organism>
    <name type="scientific">Clostridium botulinum (strain Okra / Type B1)</name>
    <dbReference type="NCBI Taxonomy" id="498213"/>
    <lineage>
        <taxon>Bacteria</taxon>
        <taxon>Bacillati</taxon>
        <taxon>Bacillota</taxon>
        <taxon>Clostridia</taxon>
        <taxon>Eubacteriales</taxon>
        <taxon>Clostridiaceae</taxon>
        <taxon>Clostridium</taxon>
    </lineage>
</organism>
<keyword id="KW-0004">4Fe-4S</keyword>
<keyword id="KW-0963">Cytoplasm</keyword>
<keyword id="KW-1015">Disulfide bond</keyword>
<keyword id="KW-0408">Iron</keyword>
<keyword id="KW-0411">Iron-sulfur</keyword>
<keyword id="KW-0479">Metal-binding</keyword>
<keyword id="KW-0489">Methyltransferase</keyword>
<keyword id="KW-0698">rRNA processing</keyword>
<keyword id="KW-0949">S-adenosyl-L-methionine</keyword>
<keyword id="KW-0808">Transferase</keyword>
<keyword id="KW-0819">tRNA processing</keyword>
<proteinExistence type="inferred from homology"/>
<gene>
    <name evidence="1" type="primary">rlmN</name>
    <name type="ordered locus">CLD_2131</name>
</gene>
<protein>
    <recommendedName>
        <fullName evidence="1">Probable dual-specificity RNA methyltransferase RlmN</fullName>
        <ecNumber evidence="1">2.1.1.192</ecNumber>
    </recommendedName>
    <alternativeName>
        <fullName evidence="1">23S rRNA (adenine(2503)-C(2))-methyltransferase</fullName>
    </alternativeName>
    <alternativeName>
        <fullName evidence="1">23S rRNA m2A2503 methyltransferase</fullName>
    </alternativeName>
    <alternativeName>
        <fullName evidence="1">Ribosomal RNA large subunit methyltransferase N</fullName>
    </alternativeName>
    <alternativeName>
        <fullName evidence="1">tRNA (adenine(37)-C(2))-methyltransferase</fullName>
    </alternativeName>
    <alternativeName>
        <fullName evidence="1">tRNA m2A37 methyltransferase</fullName>
    </alternativeName>
</protein>
<sequence length="342" mass="39042">MENILDFTLEELKEWLISKEEKAFRAKQVFDWIYNKLIFDFNNMKNIPYKTKNLLSDNFYIGVPKVVKKLMSQDKNTYKFLFEYKDGNIIESVVMKYKHGNSICVSTQVGCRMGCKFCASTLDGVIRNLTSGEILSQIMAAQKEIGERISNVVLMGSGEPLDNFENVTKFLDLVTSDTTLNIGQRHITLSTCGIVPKIKELADKNYNITLAISLHSPEDLLRKEMMPIANKYSIKELMEACDYYINKTNRRITFEYALVKGKNDSIKEAKKLSTVLKGKLCHVNLIPVNEIKENSYEKSTLKNIESFGNILKENGIETTIRREMGADINAACGQLRRSYVSK</sequence>
<evidence type="ECO:0000255" key="1">
    <source>
        <dbReference type="HAMAP-Rule" id="MF_01849"/>
    </source>
</evidence>
<evidence type="ECO:0000255" key="2">
    <source>
        <dbReference type="PROSITE-ProRule" id="PRU01266"/>
    </source>
</evidence>
<reference key="1">
    <citation type="journal article" date="2007" name="PLoS ONE">
        <title>Analysis of the neurotoxin complex genes in Clostridium botulinum A1-A4 and B1 strains: BoNT/A3, /Ba4 and /B1 clusters are located within plasmids.</title>
        <authorList>
            <person name="Smith T.J."/>
            <person name="Hill K.K."/>
            <person name="Foley B.T."/>
            <person name="Detter J.C."/>
            <person name="Munk A.C."/>
            <person name="Bruce D.C."/>
            <person name="Doggett N.A."/>
            <person name="Smith L.A."/>
            <person name="Marks J.D."/>
            <person name="Xie G."/>
            <person name="Brettin T.S."/>
        </authorList>
    </citation>
    <scope>NUCLEOTIDE SEQUENCE [LARGE SCALE GENOMIC DNA]</scope>
    <source>
        <strain>Okra / Type B1</strain>
    </source>
</reference>
<comment type="function">
    <text evidence="1">Specifically methylates position 2 of adenine 2503 in 23S rRNA and position 2 of adenine 37 in tRNAs.</text>
</comment>
<comment type="catalytic activity">
    <reaction evidence="1">
        <text>adenosine(2503) in 23S rRNA + 2 reduced [2Fe-2S]-[ferredoxin] + 2 S-adenosyl-L-methionine = 2-methyladenosine(2503) in 23S rRNA + 5'-deoxyadenosine + L-methionine + 2 oxidized [2Fe-2S]-[ferredoxin] + S-adenosyl-L-homocysteine</text>
        <dbReference type="Rhea" id="RHEA:42916"/>
        <dbReference type="Rhea" id="RHEA-COMP:10000"/>
        <dbReference type="Rhea" id="RHEA-COMP:10001"/>
        <dbReference type="Rhea" id="RHEA-COMP:10152"/>
        <dbReference type="Rhea" id="RHEA-COMP:10282"/>
        <dbReference type="ChEBI" id="CHEBI:17319"/>
        <dbReference type="ChEBI" id="CHEBI:33737"/>
        <dbReference type="ChEBI" id="CHEBI:33738"/>
        <dbReference type="ChEBI" id="CHEBI:57844"/>
        <dbReference type="ChEBI" id="CHEBI:57856"/>
        <dbReference type="ChEBI" id="CHEBI:59789"/>
        <dbReference type="ChEBI" id="CHEBI:74411"/>
        <dbReference type="ChEBI" id="CHEBI:74497"/>
        <dbReference type="EC" id="2.1.1.192"/>
    </reaction>
</comment>
<comment type="catalytic activity">
    <reaction evidence="1">
        <text>adenosine(37) in tRNA + 2 reduced [2Fe-2S]-[ferredoxin] + 2 S-adenosyl-L-methionine = 2-methyladenosine(37) in tRNA + 5'-deoxyadenosine + L-methionine + 2 oxidized [2Fe-2S]-[ferredoxin] + S-adenosyl-L-homocysteine</text>
        <dbReference type="Rhea" id="RHEA:43332"/>
        <dbReference type="Rhea" id="RHEA-COMP:10000"/>
        <dbReference type="Rhea" id="RHEA-COMP:10001"/>
        <dbReference type="Rhea" id="RHEA-COMP:10162"/>
        <dbReference type="Rhea" id="RHEA-COMP:10485"/>
        <dbReference type="ChEBI" id="CHEBI:17319"/>
        <dbReference type="ChEBI" id="CHEBI:33737"/>
        <dbReference type="ChEBI" id="CHEBI:33738"/>
        <dbReference type="ChEBI" id="CHEBI:57844"/>
        <dbReference type="ChEBI" id="CHEBI:57856"/>
        <dbReference type="ChEBI" id="CHEBI:59789"/>
        <dbReference type="ChEBI" id="CHEBI:74411"/>
        <dbReference type="ChEBI" id="CHEBI:74497"/>
        <dbReference type="EC" id="2.1.1.192"/>
    </reaction>
</comment>
<comment type="cofactor">
    <cofactor evidence="1">
        <name>[4Fe-4S] cluster</name>
        <dbReference type="ChEBI" id="CHEBI:49883"/>
    </cofactor>
    <text evidence="1">Binds 1 [4Fe-4S] cluster. The cluster is coordinated with 3 cysteines and an exchangeable S-adenosyl-L-methionine.</text>
</comment>
<comment type="subcellular location">
    <subcellularLocation>
        <location evidence="1">Cytoplasm</location>
    </subcellularLocation>
</comment>
<comment type="miscellaneous">
    <text evidence="1">Reaction proceeds by a ping-pong mechanism involving intermediate methylation of a conserved cysteine residue.</text>
</comment>
<comment type="similarity">
    <text evidence="1">Belongs to the radical SAM superfamily. RlmN family.</text>
</comment>
<dbReference type="EC" id="2.1.1.192" evidence="1"/>
<dbReference type="EMBL" id="CP000939">
    <property type="protein sequence ID" value="ACA46277.1"/>
    <property type="molecule type" value="Genomic_DNA"/>
</dbReference>
<dbReference type="RefSeq" id="WP_003402167.1">
    <property type="nucleotide sequence ID" value="NC_010516.1"/>
</dbReference>
<dbReference type="SMR" id="B1IIL7"/>
<dbReference type="KEGG" id="cbb:CLD_2131"/>
<dbReference type="HOGENOM" id="CLU_029101_0_1_9"/>
<dbReference type="Proteomes" id="UP000008541">
    <property type="component" value="Chromosome"/>
</dbReference>
<dbReference type="GO" id="GO:0005737">
    <property type="term" value="C:cytoplasm"/>
    <property type="evidence" value="ECO:0007669"/>
    <property type="project" value="UniProtKB-SubCell"/>
</dbReference>
<dbReference type="GO" id="GO:0051539">
    <property type="term" value="F:4 iron, 4 sulfur cluster binding"/>
    <property type="evidence" value="ECO:0007669"/>
    <property type="project" value="UniProtKB-UniRule"/>
</dbReference>
<dbReference type="GO" id="GO:0046872">
    <property type="term" value="F:metal ion binding"/>
    <property type="evidence" value="ECO:0007669"/>
    <property type="project" value="UniProtKB-KW"/>
</dbReference>
<dbReference type="GO" id="GO:0070040">
    <property type="term" value="F:rRNA (adenine(2503)-C2-)-methyltransferase activity"/>
    <property type="evidence" value="ECO:0007669"/>
    <property type="project" value="UniProtKB-UniRule"/>
</dbReference>
<dbReference type="GO" id="GO:0019843">
    <property type="term" value="F:rRNA binding"/>
    <property type="evidence" value="ECO:0007669"/>
    <property type="project" value="UniProtKB-UniRule"/>
</dbReference>
<dbReference type="GO" id="GO:0002935">
    <property type="term" value="F:tRNA (adenine(37)-C2)-methyltransferase activity"/>
    <property type="evidence" value="ECO:0007669"/>
    <property type="project" value="UniProtKB-UniRule"/>
</dbReference>
<dbReference type="GO" id="GO:0000049">
    <property type="term" value="F:tRNA binding"/>
    <property type="evidence" value="ECO:0007669"/>
    <property type="project" value="UniProtKB-UniRule"/>
</dbReference>
<dbReference type="GO" id="GO:0070475">
    <property type="term" value="P:rRNA base methylation"/>
    <property type="evidence" value="ECO:0007669"/>
    <property type="project" value="UniProtKB-UniRule"/>
</dbReference>
<dbReference type="GO" id="GO:0030488">
    <property type="term" value="P:tRNA methylation"/>
    <property type="evidence" value="ECO:0007669"/>
    <property type="project" value="UniProtKB-UniRule"/>
</dbReference>
<dbReference type="CDD" id="cd01335">
    <property type="entry name" value="Radical_SAM"/>
    <property type="match status" value="1"/>
</dbReference>
<dbReference type="FunFam" id="3.20.20.70:FF:000014">
    <property type="entry name" value="Probable dual-specificity RNA methyltransferase RlmN"/>
    <property type="match status" value="1"/>
</dbReference>
<dbReference type="Gene3D" id="1.10.150.530">
    <property type="match status" value="1"/>
</dbReference>
<dbReference type="Gene3D" id="3.20.20.70">
    <property type="entry name" value="Aldolase class I"/>
    <property type="match status" value="1"/>
</dbReference>
<dbReference type="HAMAP" id="MF_01849">
    <property type="entry name" value="RNA_methyltr_RlmN"/>
    <property type="match status" value="1"/>
</dbReference>
<dbReference type="InterPro" id="IPR013785">
    <property type="entry name" value="Aldolase_TIM"/>
</dbReference>
<dbReference type="InterPro" id="IPR040072">
    <property type="entry name" value="Methyltransferase_A"/>
</dbReference>
<dbReference type="InterPro" id="IPR048641">
    <property type="entry name" value="RlmN_N"/>
</dbReference>
<dbReference type="InterPro" id="IPR027492">
    <property type="entry name" value="RNA_MTrfase_RlmN"/>
</dbReference>
<dbReference type="InterPro" id="IPR004383">
    <property type="entry name" value="rRNA_lsu_MTrfase_RlmN/Cfr"/>
</dbReference>
<dbReference type="InterPro" id="IPR007197">
    <property type="entry name" value="rSAM"/>
</dbReference>
<dbReference type="NCBIfam" id="TIGR00048">
    <property type="entry name" value="rRNA_mod_RlmN"/>
    <property type="match status" value="1"/>
</dbReference>
<dbReference type="PANTHER" id="PTHR30544">
    <property type="entry name" value="23S RRNA METHYLTRANSFERASE"/>
    <property type="match status" value="1"/>
</dbReference>
<dbReference type="PANTHER" id="PTHR30544:SF5">
    <property type="entry name" value="RADICAL SAM CORE DOMAIN-CONTAINING PROTEIN"/>
    <property type="match status" value="1"/>
</dbReference>
<dbReference type="Pfam" id="PF04055">
    <property type="entry name" value="Radical_SAM"/>
    <property type="match status" value="1"/>
</dbReference>
<dbReference type="Pfam" id="PF21016">
    <property type="entry name" value="RlmN_N"/>
    <property type="match status" value="1"/>
</dbReference>
<dbReference type="PIRSF" id="PIRSF006004">
    <property type="entry name" value="CHP00048"/>
    <property type="match status" value="1"/>
</dbReference>
<dbReference type="SFLD" id="SFLDF00275">
    <property type="entry name" value="adenosine_C2_methyltransferase"/>
    <property type="match status" value="1"/>
</dbReference>
<dbReference type="SFLD" id="SFLDG01062">
    <property type="entry name" value="methyltransferase_(Class_A)"/>
    <property type="match status" value="1"/>
</dbReference>
<dbReference type="SUPFAM" id="SSF102114">
    <property type="entry name" value="Radical SAM enzymes"/>
    <property type="match status" value="1"/>
</dbReference>
<dbReference type="PROSITE" id="PS51918">
    <property type="entry name" value="RADICAL_SAM"/>
    <property type="match status" value="1"/>
</dbReference>